<feature type="chain" id="PRO_0000338611" description="GTP-binding protein 8">
    <location>
        <begin position="1"/>
        <end position="288"/>
    </location>
</feature>
<feature type="domain" description="EngB-type G">
    <location>
        <begin position="109"/>
        <end position="282"/>
    </location>
</feature>
<feature type="binding site" evidence="1">
    <location>
        <begin position="117"/>
        <end position="124"/>
    </location>
    <ligand>
        <name>GTP</name>
        <dbReference type="ChEBI" id="CHEBI:37565"/>
    </ligand>
</feature>
<feature type="binding site" evidence="1">
    <location>
        <position position="124"/>
    </location>
    <ligand>
        <name>Mg(2+)</name>
        <dbReference type="ChEBI" id="CHEBI:18420"/>
    </ligand>
</feature>
<feature type="binding site" evidence="1">
    <location>
        <begin position="146"/>
        <end position="150"/>
    </location>
    <ligand>
        <name>GTP</name>
        <dbReference type="ChEBI" id="CHEBI:37565"/>
    </ligand>
</feature>
<feature type="binding site" evidence="1">
    <location>
        <position position="148"/>
    </location>
    <ligand>
        <name>Mg(2+)</name>
        <dbReference type="ChEBI" id="CHEBI:18420"/>
    </ligand>
</feature>
<feature type="binding site" evidence="1">
    <location>
        <begin position="164"/>
        <end position="167"/>
    </location>
    <ligand>
        <name>GTP</name>
        <dbReference type="ChEBI" id="CHEBI:37565"/>
    </ligand>
</feature>
<feature type="binding site" evidence="1">
    <location>
        <begin position="226"/>
        <end position="229"/>
    </location>
    <ligand>
        <name>GTP</name>
        <dbReference type="ChEBI" id="CHEBI:37565"/>
    </ligand>
</feature>
<feature type="binding site" evidence="1">
    <location>
        <begin position="261"/>
        <end position="263"/>
    </location>
    <ligand>
        <name>GTP</name>
        <dbReference type="ChEBI" id="CHEBI:37565"/>
    </ligand>
</feature>
<accession>Q0P5E7</accession>
<evidence type="ECO:0000250" key="1"/>
<evidence type="ECO:0000305" key="2"/>
<dbReference type="EMBL" id="BC120144">
    <property type="protein sequence ID" value="AAI20145.1"/>
    <property type="molecule type" value="mRNA"/>
</dbReference>
<dbReference type="RefSeq" id="NP_001069296.1">
    <property type="nucleotide sequence ID" value="NM_001075828.2"/>
</dbReference>
<dbReference type="SMR" id="Q0P5E7"/>
<dbReference type="FunCoup" id="Q0P5E7">
    <property type="interactions" value="2242"/>
</dbReference>
<dbReference type="STRING" id="9913.ENSBTAP00000032259"/>
<dbReference type="PaxDb" id="9913-ENSBTAP00000032259"/>
<dbReference type="Ensembl" id="ENSBTAT00000032325.6">
    <property type="protein sequence ID" value="ENSBTAP00000032259.4"/>
    <property type="gene ID" value="ENSBTAG00000006534.7"/>
</dbReference>
<dbReference type="GeneID" id="522329"/>
<dbReference type="KEGG" id="bta:522329"/>
<dbReference type="CTD" id="29083"/>
<dbReference type="VEuPathDB" id="HostDB:ENSBTAG00000006534"/>
<dbReference type="VGNC" id="VGNC:55158">
    <property type="gene designation" value="GTPBP8"/>
</dbReference>
<dbReference type="eggNOG" id="KOG2486">
    <property type="taxonomic scope" value="Eukaryota"/>
</dbReference>
<dbReference type="GeneTree" id="ENSGT00390000001083"/>
<dbReference type="HOGENOM" id="CLU_033732_5_0_1"/>
<dbReference type="InParanoid" id="Q0P5E7"/>
<dbReference type="OMA" id="RMDHAPP"/>
<dbReference type="OrthoDB" id="391988at2759"/>
<dbReference type="TreeFam" id="TF331089"/>
<dbReference type="Proteomes" id="UP000009136">
    <property type="component" value="Chromosome 1"/>
</dbReference>
<dbReference type="Bgee" id="ENSBTAG00000006534">
    <property type="expression patterns" value="Expressed in conceptus and 103 other cell types or tissues"/>
</dbReference>
<dbReference type="GO" id="GO:0005739">
    <property type="term" value="C:mitochondrion"/>
    <property type="evidence" value="ECO:0000318"/>
    <property type="project" value="GO_Central"/>
</dbReference>
<dbReference type="GO" id="GO:0005525">
    <property type="term" value="F:GTP binding"/>
    <property type="evidence" value="ECO:0007669"/>
    <property type="project" value="UniProtKB-KW"/>
</dbReference>
<dbReference type="GO" id="GO:0046872">
    <property type="term" value="F:metal ion binding"/>
    <property type="evidence" value="ECO:0007669"/>
    <property type="project" value="UniProtKB-KW"/>
</dbReference>
<dbReference type="CDD" id="cd01876">
    <property type="entry name" value="YihA_EngB"/>
    <property type="match status" value="1"/>
</dbReference>
<dbReference type="FunFam" id="3.40.50.300:FF:000857">
    <property type="entry name" value="GTP-binding protein 8 isoform X1"/>
    <property type="match status" value="1"/>
</dbReference>
<dbReference type="Gene3D" id="3.40.50.300">
    <property type="entry name" value="P-loop containing nucleotide triphosphate hydrolases"/>
    <property type="match status" value="1"/>
</dbReference>
<dbReference type="HAMAP" id="MF_00321">
    <property type="entry name" value="GTPase_EngB"/>
    <property type="match status" value="1"/>
</dbReference>
<dbReference type="InterPro" id="IPR052279">
    <property type="entry name" value="EngB_GTPase"/>
</dbReference>
<dbReference type="InterPro" id="IPR030393">
    <property type="entry name" value="G_ENGB_dom"/>
</dbReference>
<dbReference type="InterPro" id="IPR006073">
    <property type="entry name" value="GTP-bd"/>
</dbReference>
<dbReference type="InterPro" id="IPR019987">
    <property type="entry name" value="GTP-bd_ribosome_bio_YsxC"/>
</dbReference>
<dbReference type="InterPro" id="IPR027417">
    <property type="entry name" value="P-loop_NTPase"/>
</dbReference>
<dbReference type="NCBIfam" id="TIGR03598">
    <property type="entry name" value="GTPase_YsxC"/>
    <property type="match status" value="1"/>
</dbReference>
<dbReference type="PANTHER" id="PTHR46498">
    <property type="entry name" value="GTP-BINDING PROTEIN 8"/>
    <property type="match status" value="1"/>
</dbReference>
<dbReference type="PANTHER" id="PTHR46498:SF1">
    <property type="entry name" value="GTP-BINDING PROTEIN 8"/>
    <property type="match status" value="1"/>
</dbReference>
<dbReference type="Pfam" id="PF01926">
    <property type="entry name" value="MMR_HSR1"/>
    <property type="match status" value="1"/>
</dbReference>
<dbReference type="SUPFAM" id="SSF52540">
    <property type="entry name" value="P-loop containing nucleoside triphosphate hydrolases"/>
    <property type="match status" value="1"/>
</dbReference>
<dbReference type="PROSITE" id="PS51706">
    <property type="entry name" value="G_ENGB"/>
    <property type="match status" value="1"/>
</dbReference>
<name>GTPB8_BOVIN</name>
<keyword id="KW-0342">GTP-binding</keyword>
<keyword id="KW-0460">Magnesium</keyword>
<keyword id="KW-0479">Metal-binding</keyword>
<keyword id="KW-0547">Nucleotide-binding</keyword>
<keyword id="KW-1185">Reference proteome</keyword>
<reference key="1">
    <citation type="submission" date="2006-08" db="EMBL/GenBank/DDBJ databases">
        <authorList>
            <consortium name="NIH - Mammalian Gene Collection (MGC) project"/>
        </authorList>
    </citation>
    <scope>NUCLEOTIDE SEQUENCE [LARGE SCALE MRNA]</scope>
    <source>
        <strain>Hereford</strain>
        <tissue>Fetal medulla</tissue>
    </source>
</reference>
<comment type="cofactor">
    <cofactor evidence="1">
        <name>Mg(2+)</name>
        <dbReference type="ChEBI" id="CHEBI:18420"/>
    </cofactor>
</comment>
<comment type="similarity">
    <text evidence="2">Belongs to the TRAFAC class TrmE-Era-EngA-EngB-Septin-like GTPase superfamily. EngB GTPase family.</text>
</comment>
<protein>
    <recommendedName>
        <fullName>GTP-binding protein 8</fullName>
    </recommendedName>
</protein>
<organism>
    <name type="scientific">Bos taurus</name>
    <name type="common">Bovine</name>
    <dbReference type="NCBI Taxonomy" id="9913"/>
    <lineage>
        <taxon>Eukaryota</taxon>
        <taxon>Metazoa</taxon>
        <taxon>Chordata</taxon>
        <taxon>Craniata</taxon>
        <taxon>Vertebrata</taxon>
        <taxon>Euteleostomi</taxon>
        <taxon>Mammalia</taxon>
        <taxon>Eutheria</taxon>
        <taxon>Laurasiatheria</taxon>
        <taxon>Artiodactyla</taxon>
        <taxon>Ruminantia</taxon>
        <taxon>Pecora</taxon>
        <taxon>Bovidae</taxon>
        <taxon>Bovinae</taxon>
        <taxon>Bos</taxon>
    </lineage>
</organism>
<proteinExistence type="evidence at transcript level"/>
<sequence length="288" mass="32566">MAAHRLRQSVGRLFAMGPELGSGRRAFSAFQAFTEVLRLPSKQLTKLVFPLEELHEHFVPGSRPDLHLNIFHPSLEDIARAESFFTASARNRIEYLTSAVRLDHAPDLHRPEVCFIGRSNVGKSSLIKALFSLAPEVEVRVSKKPGHTKKLNFYKVGKYFTLVDMPGYGYRAPEDFVDMVETYLKERKNLMRTFLLVDSVVGIQKADNIAIEMCEEFALPYVMVLTKIDKPSKGHLLKQVLQIQKFVDTKTQGCFPQLFPVSAMTYSGIHLLRCFIADITGNLKTTGF</sequence>
<gene>
    <name type="primary">GTPBP8</name>
</gene>